<accession>B7LSC1</accession>
<keyword id="KW-0010">Activator</keyword>
<keyword id="KW-0067">ATP-binding</keyword>
<keyword id="KW-0119">Carbohydrate metabolism</keyword>
<keyword id="KW-0238">DNA-binding</keyword>
<keyword id="KW-0547">Nucleotide-binding</keyword>
<keyword id="KW-0804">Transcription</keyword>
<keyword id="KW-0805">Transcription regulation</keyword>
<feature type="chain" id="PRO_1000139851" description="HTH-type transcriptional regulator MalT">
    <location>
        <begin position="1"/>
        <end position="901"/>
    </location>
</feature>
<feature type="domain" description="HTH luxR-type" evidence="1">
    <location>
        <begin position="829"/>
        <end position="894"/>
    </location>
</feature>
<feature type="DNA-binding region" description="H-T-H motif" evidence="1">
    <location>
        <begin position="853"/>
        <end position="872"/>
    </location>
</feature>
<feature type="binding site" evidence="1">
    <location>
        <begin position="39"/>
        <end position="46"/>
    </location>
    <ligand>
        <name>ATP</name>
        <dbReference type="ChEBI" id="CHEBI:30616"/>
    </ligand>
</feature>
<name>MALT_ESCF3</name>
<proteinExistence type="inferred from homology"/>
<comment type="function">
    <text evidence="1">Positively regulates the transcription of the maltose regulon whose gene products are responsible for uptake and catabolism of malto-oligosaccharides. Specifically binds to the promoter region of its target genes, recognizing a short DNA motif called the MalT box.</text>
</comment>
<comment type="activity regulation">
    <text evidence="1">Activated by ATP and maltotriose, which are both required for DNA binding.</text>
</comment>
<comment type="subunit">
    <text evidence="1">Monomer in solution. Oligomerizes to an active state in the presence of the positive effectors ATP and maltotriose.</text>
</comment>
<comment type="similarity">
    <text evidence="1">Belongs to the MalT family.</text>
</comment>
<dbReference type="EMBL" id="CU928158">
    <property type="protein sequence ID" value="CAQ90864.1"/>
    <property type="molecule type" value="Genomic_DNA"/>
</dbReference>
<dbReference type="RefSeq" id="WP_000907019.1">
    <property type="nucleotide sequence ID" value="NC_011740.1"/>
</dbReference>
<dbReference type="SMR" id="B7LSC1"/>
<dbReference type="GeneID" id="75060005"/>
<dbReference type="KEGG" id="efe:EFER_3387"/>
<dbReference type="HOGENOM" id="CLU_006325_3_0_6"/>
<dbReference type="OrthoDB" id="1123107at2"/>
<dbReference type="Proteomes" id="UP000000745">
    <property type="component" value="Chromosome"/>
</dbReference>
<dbReference type="GO" id="GO:0005524">
    <property type="term" value="F:ATP binding"/>
    <property type="evidence" value="ECO:0007669"/>
    <property type="project" value="UniProtKB-UniRule"/>
</dbReference>
<dbReference type="GO" id="GO:0003677">
    <property type="term" value="F:DNA binding"/>
    <property type="evidence" value="ECO:0007669"/>
    <property type="project" value="UniProtKB-KW"/>
</dbReference>
<dbReference type="GO" id="GO:0003700">
    <property type="term" value="F:DNA-binding transcription factor activity"/>
    <property type="evidence" value="ECO:0007669"/>
    <property type="project" value="UniProtKB-UniRule"/>
</dbReference>
<dbReference type="GO" id="GO:0045913">
    <property type="term" value="P:positive regulation of carbohydrate metabolic process"/>
    <property type="evidence" value="ECO:0007669"/>
    <property type="project" value="UniProtKB-UniRule"/>
</dbReference>
<dbReference type="GO" id="GO:0045893">
    <property type="term" value="P:positive regulation of DNA-templated transcription"/>
    <property type="evidence" value="ECO:0007669"/>
    <property type="project" value="UniProtKB-UniRule"/>
</dbReference>
<dbReference type="CDD" id="cd06170">
    <property type="entry name" value="LuxR_C_like"/>
    <property type="match status" value="1"/>
</dbReference>
<dbReference type="FunFam" id="1.10.10.10:FF:000115">
    <property type="entry name" value="HTH-type transcriptional regulator MalT"/>
    <property type="match status" value="1"/>
</dbReference>
<dbReference type="Gene3D" id="3.40.50.300">
    <property type="entry name" value="P-loop containing nucleotide triphosphate hydrolases"/>
    <property type="match status" value="1"/>
</dbReference>
<dbReference type="Gene3D" id="1.25.40.10">
    <property type="entry name" value="Tetratricopeptide repeat domain"/>
    <property type="match status" value="1"/>
</dbReference>
<dbReference type="Gene3D" id="1.10.10.10">
    <property type="entry name" value="Winged helix-like DNA-binding domain superfamily/Winged helix DNA-binding domain"/>
    <property type="match status" value="1"/>
</dbReference>
<dbReference type="HAMAP" id="MF_01247">
    <property type="entry name" value="HTH_type_MalT"/>
    <property type="match status" value="1"/>
</dbReference>
<dbReference type="InterPro" id="IPR027417">
    <property type="entry name" value="P-loop_NTPase"/>
</dbReference>
<dbReference type="InterPro" id="IPR016032">
    <property type="entry name" value="Sig_transdc_resp-reg_C-effctor"/>
</dbReference>
<dbReference type="InterPro" id="IPR011990">
    <property type="entry name" value="TPR-like_helical_dom_sf"/>
</dbReference>
<dbReference type="InterPro" id="IPR041617">
    <property type="entry name" value="TPR_MalT"/>
</dbReference>
<dbReference type="InterPro" id="IPR023768">
    <property type="entry name" value="Tscrpt_reg_HTH_MalT"/>
</dbReference>
<dbReference type="InterPro" id="IPR000792">
    <property type="entry name" value="Tscrpt_reg_LuxR_C"/>
</dbReference>
<dbReference type="InterPro" id="IPR036388">
    <property type="entry name" value="WH-like_DNA-bd_sf"/>
</dbReference>
<dbReference type="NCBIfam" id="NF003420">
    <property type="entry name" value="PRK04841.1"/>
    <property type="match status" value="1"/>
</dbReference>
<dbReference type="PANTHER" id="PTHR44688">
    <property type="entry name" value="DNA-BINDING TRANSCRIPTIONAL ACTIVATOR DEVR_DOSR"/>
    <property type="match status" value="1"/>
</dbReference>
<dbReference type="PANTHER" id="PTHR44688:SF16">
    <property type="entry name" value="DNA-BINDING TRANSCRIPTIONAL ACTIVATOR DEVR_DOSR"/>
    <property type="match status" value="1"/>
</dbReference>
<dbReference type="Pfam" id="PF00196">
    <property type="entry name" value="GerE"/>
    <property type="match status" value="1"/>
</dbReference>
<dbReference type="Pfam" id="PF17874">
    <property type="entry name" value="TPR_MalT"/>
    <property type="match status" value="1"/>
</dbReference>
<dbReference type="PRINTS" id="PR00038">
    <property type="entry name" value="HTHLUXR"/>
</dbReference>
<dbReference type="SMART" id="SM00421">
    <property type="entry name" value="HTH_LUXR"/>
    <property type="match status" value="1"/>
</dbReference>
<dbReference type="SUPFAM" id="SSF46894">
    <property type="entry name" value="C-terminal effector domain of the bipartite response regulators"/>
    <property type="match status" value="1"/>
</dbReference>
<dbReference type="SUPFAM" id="SSF52540">
    <property type="entry name" value="P-loop containing nucleoside triphosphate hydrolases"/>
    <property type="match status" value="1"/>
</dbReference>
<dbReference type="SUPFAM" id="SSF48452">
    <property type="entry name" value="TPR-like"/>
    <property type="match status" value="1"/>
</dbReference>
<dbReference type="PROSITE" id="PS00622">
    <property type="entry name" value="HTH_LUXR_1"/>
    <property type="match status" value="1"/>
</dbReference>
<dbReference type="PROSITE" id="PS50043">
    <property type="entry name" value="HTH_LUXR_2"/>
    <property type="match status" value="1"/>
</dbReference>
<evidence type="ECO:0000255" key="1">
    <source>
        <dbReference type="HAMAP-Rule" id="MF_01247"/>
    </source>
</evidence>
<reference key="1">
    <citation type="journal article" date="2009" name="PLoS Genet.">
        <title>Organised genome dynamics in the Escherichia coli species results in highly diverse adaptive paths.</title>
        <authorList>
            <person name="Touchon M."/>
            <person name="Hoede C."/>
            <person name="Tenaillon O."/>
            <person name="Barbe V."/>
            <person name="Baeriswyl S."/>
            <person name="Bidet P."/>
            <person name="Bingen E."/>
            <person name="Bonacorsi S."/>
            <person name="Bouchier C."/>
            <person name="Bouvet O."/>
            <person name="Calteau A."/>
            <person name="Chiapello H."/>
            <person name="Clermont O."/>
            <person name="Cruveiller S."/>
            <person name="Danchin A."/>
            <person name="Diard M."/>
            <person name="Dossat C."/>
            <person name="Karoui M.E."/>
            <person name="Frapy E."/>
            <person name="Garry L."/>
            <person name="Ghigo J.M."/>
            <person name="Gilles A.M."/>
            <person name="Johnson J."/>
            <person name="Le Bouguenec C."/>
            <person name="Lescat M."/>
            <person name="Mangenot S."/>
            <person name="Martinez-Jehanne V."/>
            <person name="Matic I."/>
            <person name="Nassif X."/>
            <person name="Oztas S."/>
            <person name="Petit M.A."/>
            <person name="Pichon C."/>
            <person name="Rouy Z."/>
            <person name="Ruf C.S."/>
            <person name="Schneider D."/>
            <person name="Tourret J."/>
            <person name="Vacherie B."/>
            <person name="Vallenet D."/>
            <person name="Medigue C."/>
            <person name="Rocha E.P.C."/>
            <person name="Denamur E."/>
        </authorList>
    </citation>
    <scope>NUCLEOTIDE SEQUENCE [LARGE SCALE GENOMIC DNA]</scope>
    <source>
        <strain>ATCC 35469 / DSM 13698 / BCRC 15582 / CCUG 18766 / IAM 14443 / JCM 21226 / LMG 7866 / NBRC 102419 / NCTC 12128 / CDC 0568-73</strain>
    </source>
</reference>
<protein>
    <recommendedName>
        <fullName evidence="1">HTH-type transcriptional regulator MalT</fullName>
    </recommendedName>
    <alternativeName>
        <fullName evidence="1">ATP-dependent transcriptional activator MalT</fullName>
    </alternativeName>
</protein>
<organism>
    <name type="scientific">Escherichia fergusonii (strain ATCC 35469 / DSM 13698 / CCUG 18766 / IAM 14443 / JCM 21226 / LMG 7866 / NBRC 102419 / NCTC 12128 / CDC 0568-73)</name>
    <dbReference type="NCBI Taxonomy" id="585054"/>
    <lineage>
        <taxon>Bacteria</taxon>
        <taxon>Pseudomonadati</taxon>
        <taxon>Pseudomonadota</taxon>
        <taxon>Gammaproteobacteria</taxon>
        <taxon>Enterobacterales</taxon>
        <taxon>Enterobacteriaceae</taxon>
        <taxon>Escherichia</taxon>
    </lineage>
</organism>
<sequence>MLIPSKLSRPVRLDHTVVRERLLAKLSGANNFRLALITSPAGYGKTTLVSQWAAGKSELGWFSLDEGDNQQERFASYLIAAIQQATNGHCTASEVMAQKRQYASLSSLFAQLFIELAEWHQPLYLVIDDYHLITNPVIHESMRFFLRHQPENLTLVVMSRNLPQLGIANLRVRDQLLEIGSQQLAFNHQEAKQFFDRRLTSPIEAAESSRMCDDVSGWATALQLIALSARQNSHSAHQSARRLSGINASHLSDYLVDEVLNNVDLATRHFLLKSAILRSMNDALITRVTGEENGQMRLEEIERQGLFLQRMDDSGEWFSYHPLFGNFLRQRCQWELAAELPEIHLAAAESWMAQGFPSEAIHHALAAGDASMLRDILLNHAWGLFNHSELALLEESLKALPWESLLENPRLVLLQAWLMQSQHRYSEVNTLLARAEQEIKGEMTGTLHAEFNALRAQVAINAGNPEEAERLARLALDELPIAWFYSRIVATSVHGEVLHCKGDLSRSLALMQQTEQMARHHDVWHYALWSLIQQSEIYFAQGFLQAAWETQDKAFQLIKEQHLEQLPMHEFLVRIRAQLLWAWSRLDEAEASARSGIEVLSSFQPQQQLQCLALLVQCSLARGDLDNARTLLNRLENLLGNGQYHSDWISNADKVRVIYWQMTGDKKAAANWLSQTPKPEFANNHFLQGQWRNIARAQILLGEFEPAEIVLEELNENARQLRLMSDLNRNLLLLNQLYWQAGRKNDAQRVLMEALQLANRTGFISHFVIEGEAMAQQLRQLIQLNTLPELEQHRAQRILREINQHHRHKFAHFDENFVERLLNHPEVPELIRTSPLTQREWQVLGLIYSGYSNEQIAGELEVAATTIKTHIRNLYQKLGVAHRQDAVQHAQQLLKMMGYGV</sequence>
<gene>
    <name evidence="1" type="primary">malT</name>
    <name type="ordered locus">EFER_3387</name>
</gene>